<feature type="transit peptide" description="Chloroplast" evidence="1">
    <location>
        <begin position="1"/>
        <end position="56"/>
    </location>
</feature>
<feature type="chain" id="PRO_0000031535" description="Ribulose bisphosphate carboxylase small subunit, chloroplastic 1" evidence="1">
    <location>
        <begin position="57"/>
        <end position="180"/>
    </location>
</feature>
<gene>
    <name evidence="1" type="primary">RBCS1</name>
    <name type="synonym">RBCS</name>
</gene>
<comment type="function">
    <text evidence="1">RuBisCO catalyzes two reactions: the carboxylation of D-ribulose 1,5-bisphosphate, the primary event in carbon dioxide fixation, as well as the oxidative fragmentation of the pentose substrate. Both reactions occur simultaneously and in competition at the same active site. Although the small subunit is not catalytic it is essential for maximal activity.</text>
</comment>
<comment type="subunit">
    <text evidence="1">Heterohexadecamer of 8 large and 8 small subunits.</text>
</comment>
<comment type="subcellular location">
    <subcellularLocation>
        <location evidence="1">Plastid</location>
        <location evidence="1">Chloroplast</location>
    </subcellularLocation>
</comment>
<comment type="miscellaneous">
    <text evidence="1">The basic functional RuBisCO is composed of a large chain homodimer in a 'head-to-tail' conformation. In form I RuBisCO this homodimer is arranged in a barrel-like tetramer with the small subunits forming a tetrameric 'cap' on each end of the 'barrel'.</text>
</comment>
<comment type="similarity">
    <text evidence="1">Belongs to the RuBisCO small chain family.</text>
</comment>
<sequence>MASSVLSSAAVATRSNVAQANMVAPFTGLKSAASFPVSRKQNLDITSIASNGGRVQCMQVWPPINKKKYETLSYLPDLSQEQLLSEVEYLLKNGWVPCLEFETEHGFVYRENNKSPGYYDGRYWTMWKLPMFGCTDATQVLAEVEEAKKAYPQAWIRIIGFDNVRQVQCISFIAYKPEGY</sequence>
<proteinExistence type="evidence at transcript level"/>
<dbReference type="EMBL" id="X01722">
    <property type="protein sequence ID" value="CAA25862.1"/>
    <property type="molecule type" value="mRNA"/>
</dbReference>
<dbReference type="EMBL" id="J01308">
    <property type="protein sequence ID" value="AAA34111.1"/>
    <property type="molecule type" value="mRNA"/>
</dbReference>
<dbReference type="PIR" id="A01085">
    <property type="entry name" value="RKNTSS"/>
</dbReference>
<dbReference type="RefSeq" id="NP_001393386.1">
    <property type="nucleotide sequence ID" value="NM_001406457.1"/>
</dbReference>
<dbReference type="RefSeq" id="XP_009772497.1">
    <property type="nucleotide sequence ID" value="XM_009774195.1"/>
</dbReference>
<dbReference type="RefSeq" id="XP_009795056.1">
    <property type="nucleotide sequence ID" value="XM_009796754.1"/>
</dbReference>
<dbReference type="SMR" id="P69250"/>
<dbReference type="STRING" id="4096.P69250"/>
<dbReference type="GeneID" id="104222872"/>
<dbReference type="GeneID" id="104241798"/>
<dbReference type="KEGG" id="nsy:104241798"/>
<dbReference type="eggNOG" id="ENOG502QT0M">
    <property type="taxonomic scope" value="Eukaryota"/>
</dbReference>
<dbReference type="OrthoDB" id="8392at4085"/>
<dbReference type="Proteomes" id="UP000189701">
    <property type="component" value="Unplaced"/>
</dbReference>
<dbReference type="GO" id="GO:0009507">
    <property type="term" value="C:chloroplast"/>
    <property type="evidence" value="ECO:0007669"/>
    <property type="project" value="UniProtKB-SubCell"/>
</dbReference>
<dbReference type="GO" id="GO:0016984">
    <property type="term" value="F:ribulose-bisphosphate carboxylase activity"/>
    <property type="evidence" value="ECO:0007669"/>
    <property type="project" value="UniProtKB-UniRule"/>
</dbReference>
<dbReference type="GO" id="GO:0009853">
    <property type="term" value="P:photorespiration"/>
    <property type="evidence" value="ECO:0007669"/>
    <property type="project" value="UniProtKB-KW"/>
</dbReference>
<dbReference type="GO" id="GO:0019253">
    <property type="term" value="P:reductive pentose-phosphate cycle"/>
    <property type="evidence" value="ECO:0007669"/>
    <property type="project" value="UniProtKB-UniRule"/>
</dbReference>
<dbReference type="CDD" id="cd03527">
    <property type="entry name" value="RuBisCO_small"/>
    <property type="match status" value="1"/>
</dbReference>
<dbReference type="FunFam" id="3.30.190.10:FF:000001">
    <property type="entry name" value="Ribulose bisphosphate carboxylase small chain, chloroplastic"/>
    <property type="match status" value="1"/>
</dbReference>
<dbReference type="Gene3D" id="3.30.190.10">
    <property type="entry name" value="Ribulose bisphosphate carboxylase, small subunit"/>
    <property type="match status" value="1"/>
</dbReference>
<dbReference type="HAMAP" id="MF_00859">
    <property type="entry name" value="RuBisCO_S_bact"/>
    <property type="match status" value="1"/>
</dbReference>
<dbReference type="InterPro" id="IPR024681">
    <property type="entry name" value="RuBisCO_ssu"/>
</dbReference>
<dbReference type="InterPro" id="IPR000894">
    <property type="entry name" value="RuBisCO_ssu_dom"/>
</dbReference>
<dbReference type="InterPro" id="IPR024680">
    <property type="entry name" value="RuBisCO_ssu_N"/>
</dbReference>
<dbReference type="InterPro" id="IPR036385">
    <property type="entry name" value="RuBisCO_ssu_sf"/>
</dbReference>
<dbReference type="PANTHER" id="PTHR31262">
    <property type="entry name" value="RIBULOSE BISPHOSPHATE CARBOXYLASE SMALL CHAIN 1, CHLOROPLASTIC"/>
    <property type="match status" value="1"/>
</dbReference>
<dbReference type="PANTHER" id="PTHR31262:SF10">
    <property type="entry name" value="RIBULOSE BISPHOSPHATE CARBOXYLASE SMALL SUBUNIT 1A, CHLOROPLASTIC-RELATED"/>
    <property type="match status" value="1"/>
</dbReference>
<dbReference type="Pfam" id="PF12338">
    <property type="entry name" value="RbcS"/>
    <property type="match status" value="1"/>
</dbReference>
<dbReference type="Pfam" id="PF00101">
    <property type="entry name" value="RuBisCO_small"/>
    <property type="match status" value="1"/>
</dbReference>
<dbReference type="PRINTS" id="PR00152">
    <property type="entry name" value="RUBISCOSMALL"/>
</dbReference>
<dbReference type="SMART" id="SM00961">
    <property type="entry name" value="RuBisCO_small"/>
    <property type="match status" value="1"/>
</dbReference>
<dbReference type="SUPFAM" id="SSF55239">
    <property type="entry name" value="RuBisCO, small subunit"/>
    <property type="match status" value="1"/>
</dbReference>
<keyword id="KW-0113">Calvin cycle</keyword>
<keyword id="KW-0120">Carbon dioxide fixation</keyword>
<keyword id="KW-0150">Chloroplast</keyword>
<keyword id="KW-0601">Photorespiration</keyword>
<keyword id="KW-0602">Photosynthesis</keyword>
<keyword id="KW-0934">Plastid</keyword>
<keyword id="KW-1185">Reference proteome</keyword>
<keyword id="KW-0809">Transit peptide</keyword>
<protein>
    <recommendedName>
        <fullName evidence="1">Ribulose bisphosphate carboxylase small subunit, chloroplastic 1</fullName>
        <shortName evidence="1">RuBisCO small subunit 1</shortName>
    </recommendedName>
</protein>
<name>RBS1_NICSY</name>
<organism>
    <name type="scientific">Nicotiana sylvestris</name>
    <name type="common">Wood tobacco</name>
    <name type="synonym">South American tobacco</name>
    <dbReference type="NCBI Taxonomy" id="4096"/>
    <lineage>
        <taxon>Eukaryota</taxon>
        <taxon>Viridiplantae</taxon>
        <taxon>Streptophyta</taxon>
        <taxon>Embryophyta</taxon>
        <taxon>Tracheophyta</taxon>
        <taxon>Spermatophyta</taxon>
        <taxon>Magnoliopsida</taxon>
        <taxon>eudicotyledons</taxon>
        <taxon>Gunneridae</taxon>
        <taxon>Pentapetalae</taxon>
        <taxon>asterids</taxon>
        <taxon>lamiids</taxon>
        <taxon>Solanales</taxon>
        <taxon>Solanaceae</taxon>
        <taxon>Nicotianoideae</taxon>
        <taxon>Nicotianeae</taxon>
        <taxon>Nicotiana</taxon>
    </lineage>
</organism>
<reference key="1">
    <citation type="journal article" date="1984" name="Biochimie">
        <title>Complete sequence of one of the mRNAs coding for the small subunit of ribulose bisphosphate carboxylase of Nicotiana sylvestris.</title>
        <authorList>
            <person name="Pinck M."/>
            <person name="Guilley E."/>
            <person name="Durr A."/>
            <person name="Hoff M."/>
            <person name="Pinck L."/>
            <person name="Fleck J."/>
        </authorList>
    </citation>
    <scope>NUCLEOTIDE SEQUENCE [MRNA]</scope>
</reference>
<reference key="2">
    <citation type="journal article" date="1983" name="FEBS Lett.">
        <title>Sequence of a cDNA clone encoding part of the small subunit of the ribulose-1,5-bisphosphate carboxylase of Nicotiana sylvestris.</title>
        <authorList>
            <person name="Pinck L."/>
            <person name="Fleck J."/>
            <person name="Pinck M."/>
            <person name="Hadidane R."/>
            <person name="Hirth L."/>
        </authorList>
    </citation>
    <scope>NUCLEOTIDE SEQUENCE [MRNA] OF 95-180</scope>
</reference>
<accession>P69250</accession>
<accession>P00866</accession>
<accession>P00867</accession>
<accession>P26666</accession>
<evidence type="ECO:0000255" key="1">
    <source>
        <dbReference type="HAMAP-Rule" id="MF_00860"/>
    </source>
</evidence>